<protein>
    <recommendedName>
        <fullName>Probable methyltransferase PMT28</fullName>
        <ecNumber>2.1.1.-</ecNumber>
    </recommendedName>
</protein>
<accession>Q9LN50</accession>
<evidence type="ECO:0000255" key="1"/>
<evidence type="ECO:0000256" key="2">
    <source>
        <dbReference type="SAM" id="MobiDB-lite"/>
    </source>
</evidence>
<evidence type="ECO:0000305" key="3"/>
<sequence>MMERKREMGIAYFARRIKQPRGIWVKMTFIVVLGLCFVFFWSFLSSSASTFNVQRESFDDIAEPVSSRTKSAHEVSESSKLHERGKVESGSKSKEGKKVGGSSVHKHETKKKKEHAVSHPHKKKDVPKPVVEEVVVKEDQEHEEAESDDSDQSNKEDGEEGTESDGNEGESDGNGDGSVDDSSASVDEEVEEKNEEVTVNEISKKRKRKGPVFDPKAEYSWRLCNTRSKHNYMPCIDNDGLIGRLQSYRHRERSCPKKPVMCLVPLPHDGYDPPVSWPESKSKILYKNVAHPKLAAYIKKHNWVNETGEYLSFPQNQTTFNGNVLQYLEFIQEMVPDIEWGKNVRIVLDIGCSDSSFVAALLDKDVLTVSLGLKDDLVDLAQVALERGFPTFVSSLASRRLPFPSGVFDTIHCAACGVHWHSHGGKLLLEMNRILRPNGYFILSSNNDKIEDDEAMTALTASICWNILAHKTEEASEMGVRIYQKPESNDIYELRRKKNPPLCEDNENPDAAWYVPMKTCIYEIPSAIEQHGAEWPEEWPKRLETYPEWLTSKEKAMEDTNHWNAMVNKSYLTGLGIDWLHIRNVMDMTAIYGGFGASLVKQNVWVMNVVPVHSPDTLPFIYERGLLGIYHDWCEPFGTYPRSYDLLHADHLFSRLKNRCKQPASIVVEMDRLTRPGGWVVVRDKVEILEPLEEILRSLHWEIRMTYAQDKEGMLCAQKTLWRP</sequence>
<feature type="chain" id="PRO_0000393268" description="Probable methyltransferase PMT28">
    <location>
        <begin position="1"/>
        <end position="724"/>
    </location>
</feature>
<feature type="topological domain" description="Cytoplasmic" evidence="1">
    <location>
        <begin position="1"/>
        <end position="22"/>
    </location>
</feature>
<feature type="transmembrane region" description="Helical; Signal-anchor for type II membrane protein" evidence="1">
    <location>
        <begin position="23"/>
        <end position="43"/>
    </location>
</feature>
<feature type="topological domain" description="Lumenal" evidence="1">
    <location>
        <begin position="44"/>
        <end position="724"/>
    </location>
</feature>
<feature type="region of interest" description="Disordered" evidence="2">
    <location>
        <begin position="63"/>
        <end position="211"/>
    </location>
</feature>
<feature type="compositionally biased region" description="Basic and acidic residues" evidence="2">
    <location>
        <begin position="71"/>
        <end position="98"/>
    </location>
</feature>
<feature type="compositionally biased region" description="Basic residues" evidence="2">
    <location>
        <begin position="107"/>
        <end position="125"/>
    </location>
</feature>
<feature type="compositionally biased region" description="Basic and acidic residues" evidence="2">
    <location>
        <begin position="126"/>
        <end position="140"/>
    </location>
</feature>
<feature type="compositionally biased region" description="Acidic residues" evidence="2">
    <location>
        <begin position="141"/>
        <end position="173"/>
    </location>
</feature>
<feature type="glycosylation site" description="N-linked (GlcNAc...) asparagine" evidence="1">
    <location>
        <position position="305"/>
    </location>
</feature>
<feature type="glycosylation site" description="N-linked (GlcNAc...) asparagine" evidence="1">
    <location>
        <position position="316"/>
    </location>
</feature>
<feature type="glycosylation site" description="N-linked (GlcNAc...) asparagine" evidence="1">
    <location>
        <position position="568"/>
    </location>
</feature>
<organism>
    <name type="scientific">Arabidopsis thaliana</name>
    <name type="common">Mouse-ear cress</name>
    <dbReference type="NCBI Taxonomy" id="3702"/>
    <lineage>
        <taxon>Eukaryota</taxon>
        <taxon>Viridiplantae</taxon>
        <taxon>Streptophyta</taxon>
        <taxon>Embryophyta</taxon>
        <taxon>Tracheophyta</taxon>
        <taxon>Spermatophyta</taxon>
        <taxon>Magnoliopsida</taxon>
        <taxon>eudicotyledons</taxon>
        <taxon>Gunneridae</taxon>
        <taxon>Pentapetalae</taxon>
        <taxon>rosids</taxon>
        <taxon>malvids</taxon>
        <taxon>Brassicales</taxon>
        <taxon>Brassicaceae</taxon>
        <taxon>Camelineae</taxon>
        <taxon>Arabidopsis</taxon>
    </lineage>
</organism>
<comment type="subcellular location">
    <subcellularLocation>
        <location evidence="3">Golgi apparatus membrane</location>
        <topology evidence="3">Single-pass type II membrane protein</topology>
    </subcellularLocation>
</comment>
<comment type="similarity">
    <text evidence="3">Belongs to the methyltransferase superfamily.</text>
</comment>
<keyword id="KW-0325">Glycoprotein</keyword>
<keyword id="KW-0333">Golgi apparatus</keyword>
<keyword id="KW-0472">Membrane</keyword>
<keyword id="KW-0489">Methyltransferase</keyword>
<keyword id="KW-1185">Reference proteome</keyword>
<keyword id="KW-0735">Signal-anchor</keyword>
<keyword id="KW-0808">Transferase</keyword>
<keyword id="KW-0812">Transmembrane</keyword>
<keyword id="KW-1133">Transmembrane helix</keyword>
<name>PMTS_ARATH</name>
<proteinExistence type="evidence at transcript level"/>
<reference key="1">
    <citation type="journal article" date="2000" name="Nature">
        <title>Sequence and analysis of chromosome 1 of the plant Arabidopsis thaliana.</title>
        <authorList>
            <person name="Theologis A."/>
            <person name="Ecker J.R."/>
            <person name="Palm C.J."/>
            <person name="Federspiel N.A."/>
            <person name="Kaul S."/>
            <person name="White O."/>
            <person name="Alonso J."/>
            <person name="Altafi H."/>
            <person name="Araujo R."/>
            <person name="Bowman C.L."/>
            <person name="Brooks S.Y."/>
            <person name="Buehler E."/>
            <person name="Chan A."/>
            <person name="Chao Q."/>
            <person name="Chen H."/>
            <person name="Cheuk R.F."/>
            <person name="Chin C.W."/>
            <person name="Chung M.K."/>
            <person name="Conn L."/>
            <person name="Conway A.B."/>
            <person name="Conway A.R."/>
            <person name="Creasy T.H."/>
            <person name="Dewar K."/>
            <person name="Dunn P."/>
            <person name="Etgu P."/>
            <person name="Feldblyum T.V."/>
            <person name="Feng J.-D."/>
            <person name="Fong B."/>
            <person name="Fujii C.Y."/>
            <person name="Gill J.E."/>
            <person name="Goldsmith A.D."/>
            <person name="Haas B."/>
            <person name="Hansen N.F."/>
            <person name="Hughes B."/>
            <person name="Huizar L."/>
            <person name="Hunter J.L."/>
            <person name="Jenkins J."/>
            <person name="Johnson-Hopson C."/>
            <person name="Khan S."/>
            <person name="Khaykin E."/>
            <person name="Kim C.J."/>
            <person name="Koo H.L."/>
            <person name="Kremenetskaia I."/>
            <person name="Kurtz D.B."/>
            <person name="Kwan A."/>
            <person name="Lam B."/>
            <person name="Langin-Hooper S."/>
            <person name="Lee A."/>
            <person name="Lee J.M."/>
            <person name="Lenz C.A."/>
            <person name="Li J.H."/>
            <person name="Li Y.-P."/>
            <person name="Lin X."/>
            <person name="Liu S.X."/>
            <person name="Liu Z.A."/>
            <person name="Luros J.S."/>
            <person name="Maiti R."/>
            <person name="Marziali A."/>
            <person name="Militscher J."/>
            <person name="Miranda M."/>
            <person name="Nguyen M."/>
            <person name="Nierman W.C."/>
            <person name="Osborne B.I."/>
            <person name="Pai G."/>
            <person name="Peterson J."/>
            <person name="Pham P.K."/>
            <person name="Rizzo M."/>
            <person name="Rooney T."/>
            <person name="Rowley D."/>
            <person name="Sakano H."/>
            <person name="Salzberg S.L."/>
            <person name="Schwartz J.R."/>
            <person name="Shinn P."/>
            <person name="Southwick A.M."/>
            <person name="Sun H."/>
            <person name="Tallon L.J."/>
            <person name="Tambunga G."/>
            <person name="Toriumi M.J."/>
            <person name="Town C.D."/>
            <person name="Utterback T."/>
            <person name="Van Aken S."/>
            <person name="Vaysberg M."/>
            <person name="Vysotskaia V.S."/>
            <person name="Walker M."/>
            <person name="Wu D."/>
            <person name="Yu G."/>
            <person name="Fraser C.M."/>
            <person name="Venter J.C."/>
            <person name="Davis R.W."/>
        </authorList>
    </citation>
    <scope>NUCLEOTIDE SEQUENCE [LARGE SCALE GENOMIC DNA]</scope>
    <source>
        <strain>cv. Columbia</strain>
    </source>
</reference>
<reference key="2">
    <citation type="journal article" date="2017" name="Plant J.">
        <title>Araport11: a complete reannotation of the Arabidopsis thaliana reference genome.</title>
        <authorList>
            <person name="Cheng C.Y."/>
            <person name="Krishnakumar V."/>
            <person name="Chan A.P."/>
            <person name="Thibaud-Nissen F."/>
            <person name="Schobel S."/>
            <person name="Town C.D."/>
        </authorList>
    </citation>
    <scope>GENOME REANNOTATION</scope>
    <source>
        <strain>cv. Columbia</strain>
    </source>
</reference>
<reference key="3">
    <citation type="journal article" date="2003" name="Science">
        <title>Empirical analysis of transcriptional activity in the Arabidopsis genome.</title>
        <authorList>
            <person name="Yamada K."/>
            <person name="Lim J."/>
            <person name="Dale J.M."/>
            <person name="Chen H."/>
            <person name="Shinn P."/>
            <person name="Palm C.J."/>
            <person name="Southwick A.M."/>
            <person name="Wu H.C."/>
            <person name="Kim C.J."/>
            <person name="Nguyen M."/>
            <person name="Pham P.K."/>
            <person name="Cheuk R.F."/>
            <person name="Karlin-Newmann G."/>
            <person name="Liu S.X."/>
            <person name="Lam B."/>
            <person name="Sakano H."/>
            <person name="Wu T."/>
            <person name="Yu G."/>
            <person name="Miranda M."/>
            <person name="Quach H.L."/>
            <person name="Tripp M."/>
            <person name="Chang C.H."/>
            <person name="Lee J.M."/>
            <person name="Toriumi M.J."/>
            <person name="Chan M.M."/>
            <person name="Tang C.C."/>
            <person name="Onodera C.S."/>
            <person name="Deng J.M."/>
            <person name="Akiyama K."/>
            <person name="Ansari Y."/>
            <person name="Arakawa T."/>
            <person name="Banh J."/>
            <person name="Banno F."/>
            <person name="Bowser L."/>
            <person name="Brooks S.Y."/>
            <person name="Carninci P."/>
            <person name="Chao Q."/>
            <person name="Choy N."/>
            <person name="Enju A."/>
            <person name="Goldsmith A.D."/>
            <person name="Gurjal M."/>
            <person name="Hansen N.F."/>
            <person name="Hayashizaki Y."/>
            <person name="Johnson-Hopson C."/>
            <person name="Hsuan V.W."/>
            <person name="Iida K."/>
            <person name="Karnes M."/>
            <person name="Khan S."/>
            <person name="Koesema E."/>
            <person name="Ishida J."/>
            <person name="Jiang P.X."/>
            <person name="Jones T."/>
            <person name="Kawai J."/>
            <person name="Kamiya A."/>
            <person name="Meyers C."/>
            <person name="Nakajima M."/>
            <person name="Narusaka M."/>
            <person name="Seki M."/>
            <person name="Sakurai T."/>
            <person name="Satou M."/>
            <person name="Tamse R."/>
            <person name="Vaysberg M."/>
            <person name="Wallender E.K."/>
            <person name="Wong C."/>
            <person name="Yamamura Y."/>
            <person name="Yuan S."/>
            <person name="Shinozaki K."/>
            <person name="Davis R.W."/>
            <person name="Theologis A."/>
            <person name="Ecker J.R."/>
        </authorList>
    </citation>
    <scope>NUCLEOTIDE SEQUENCE [LARGE SCALE MRNA]</scope>
    <source>
        <strain>cv. Columbia</strain>
    </source>
</reference>
<reference key="4">
    <citation type="journal article" date="2007" name="Plant J.">
        <title>The TUMOROUS SHOOT DEVELOPMENT2 gene of Arabidopsis encoding a putative methyltransferase is required for cell adhesion and co-ordinated plant development.</title>
        <authorList>
            <person name="Krupkova E."/>
            <person name="Immerzeel P."/>
            <person name="Pauly M."/>
            <person name="Schmulling T."/>
        </authorList>
    </citation>
    <scope>GENE FAMILY</scope>
</reference>
<dbReference type="EC" id="2.1.1.-"/>
<dbReference type="EMBL" id="AC025808">
    <property type="protein sequence ID" value="AAF79446.1"/>
    <property type="molecule type" value="Genomic_DNA"/>
</dbReference>
<dbReference type="EMBL" id="CP002684">
    <property type="protein sequence ID" value="AEE29851.1"/>
    <property type="molecule type" value="Genomic_DNA"/>
</dbReference>
<dbReference type="EMBL" id="CP002684">
    <property type="protein sequence ID" value="ANM60983.1"/>
    <property type="molecule type" value="Genomic_DNA"/>
</dbReference>
<dbReference type="EMBL" id="AY056127">
    <property type="protein sequence ID" value="AAL07206.1"/>
    <property type="molecule type" value="mRNA"/>
</dbReference>
<dbReference type="EMBL" id="BT001953">
    <property type="protein sequence ID" value="AAN71952.1"/>
    <property type="molecule type" value="mRNA"/>
</dbReference>
<dbReference type="RefSeq" id="NP_001323230.1">
    <property type="nucleotide sequence ID" value="NM_001332395.1"/>
</dbReference>
<dbReference type="RefSeq" id="NP_564084.1">
    <property type="nucleotide sequence ID" value="NM_101799.2"/>
</dbReference>
<dbReference type="SMR" id="Q9LN50"/>
<dbReference type="FunCoup" id="Q9LN50">
    <property type="interactions" value="2091"/>
</dbReference>
<dbReference type="STRING" id="3702.Q9LN50"/>
<dbReference type="GlyGen" id="Q9LN50">
    <property type="glycosylation" value="3 sites"/>
</dbReference>
<dbReference type="PaxDb" id="3702-AT1G19430.1"/>
<dbReference type="ProteomicsDB" id="226285"/>
<dbReference type="EnsemblPlants" id="AT1G19430.1">
    <property type="protein sequence ID" value="AT1G19430.1"/>
    <property type="gene ID" value="AT1G19430"/>
</dbReference>
<dbReference type="EnsemblPlants" id="AT1G19430.3">
    <property type="protein sequence ID" value="AT1G19430.3"/>
    <property type="gene ID" value="AT1G19430"/>
</dbReference>
<dbReference type="GeneID" id="838527"/>
<dbReference type="Gramene" id="AT1G19430.1">
    <property type="protein sequence ID" value="AT1G19430.1"/>
    <property type="gene ID" value="AT1G19430"/>
</dbReference>
<dbReference type="Gramene" id="AT1G19430.3">
    <property type="protein sequence ID" value="AT1G19430.3"/>
    <property type="gene ID" value="AT1G19430"/>
</dbReference>
<dbReference type="KEGG" id="ath:AT1G19430"/>
<dbReference type="Araport" id="AT1G19430"/>
<dbReference type="TAIR" id="AT1G19430"/>
<dbReference type="eggNOG" id="ENOG502QRYM">
    <property type="taxonomic scope" value="Eukaryota"/>
</dbReference>
<dbReference type="HOGENOM" id="CLU_010485_2_4_1"/>
<dbReference type="InParanoid" id="Q9LN50"/>
<dbReference type="OMA" id="VHWPESK"/>
<dbReference type="OrthoDB" id="2013972at2759"/>
<dbReference type="PhylomeDB" id="Q9LN50"/>
<dbReference type="PRO" id="PR:Q9LN50"/>
<dbReference type="Proteomes" id="UP000006548">
    <property type="component" value="Chromosome 1"/>
</dbReference>
<dbReference type="ExpressionAtlas" id="Q9LN50">
    <property type="expression patterns" value="baseline and differential"/>
</dbReference>
<dbReference type="GO" id="GO:0005768">
    <property type="term" value="C:endosome"/>
    <property type="evidence" value="ECO:0007005"/>
    <property type="project" value="TAIR"/>
</dbReference>
<dbReference type="GO" id="GO:0005794">
    <property type="term" value="C:Golgi apparatus"/>
    <property type="evidence" value="ECO:0007005"/>
    <property type="project" value="TAIR"/>
</dbReference>
<dbReference type="GO" id="GO:0000139">
    <property type="term" value="C:Golgi membrane"/>
    <property type="evidence" value="ECO:0007669"/>
    <property type="project" value="UniProtKB-SubCell"/>
</dbReference>
<dbReference type="GO" id="GO:0000138">
    <property type="term" value="C:Golgi trans cisterna"/>
    <property type="evidence" value="ECO:0007005"/>
    <property type="project" value="TAIR"/>
</dbReference>
<dbReference type="GO" id="GO:0005802">
    <property type="term" value="C:trans-Golgi network"/>
    <property type="evidence" value="ECO:0007005"/>
    <property type="project" value="TAIR"/>
</dbReference>
<dbReference type="GO" id="GO:0008168">
    <property type="term" value="F:methyltransferase activity"/>
    <property type="evidence" value="ECO:0007669"/>
    <property type="project" value="UniProtKB-KW"/>
</dbReference>
<dbReference type="GO" id="GO:0032259">
    <property type="term" value="P:methylation"/>
    <property type="evidence" value="ECO:0007669"/>
    <property type="project" value="UniProtKB-KW"/>
</dbReference>
<dbReference type="CDD" id="cd02440">
    <property type="entry name" value="AdoMet_MTases"/>
    <property type="match status" value="1"/>
</dbReference>
<dbReference type="FunFam" id="3.40.50.150:FF:000258">
    <property type="entry name" value="Probable methyltransferase PMT28"/>
    <property type="match status" value="1"/>
</dbReference>
<dbReference type="Gene3D" id="3.40.50.150">
    <property type="entry name" value="Vaccinia Virus protein VP39"/>
    <property type="match status" value="1"/>
</dbReference>
<dbReference type="InterPro" id="IPR004159">
    <property type="entry name" value="Put_SAM_MeTrfase"/>
</dbReference>
<dbReference type="InterPro" id="IPR029063">
    <property type="entry name" value="SAM-dependent_MTases_sf"/>
</dbReference>
<dbReference type="PANTHER" id="PTHR10108:SF1102">
    <property type="entry name" value="METHYLTRANSFERASE PMT28-RELATED"/>
    <property type="match status" value="1"/>
</dbReference>
<dbReference type="PANTHER" id="PTHR10108">
    <property type="entry name" value="SAM-DEPENDENT METHYLTRANSFERASE"/>
    <property type="match status" value="1"/>
</dbReference>
<dbReference type="Pfam" id="PF03141">
    <property type="entry name" value="Methyltransf_29"/>
    <property type="match status" value="1"/>
</dbReference>
<dbReference type="SUPFAM" id="SSF53335">
    <property type="entry name" value="S-adenosyl-L-methionine-dependent methyltransferases"/>
    <property type="match status" value="2"/>
</dbReference>
<gene>
    <name type="ordered locus">At1g19430</name>
    <name type="ORF">F18O14.20</name>
</gene>